<reference key="1">
    <citation type="journal article" date="2000" name="J. Infect. Dis.">
        <title>Nucleotide sequences that distinguish Oka vaccine from parental Oka and other varicella-zoster virus isolates.</title>
        <authorList>
            <person name="Argaw T."/>
            <person name="Cohen J.I."/>
            <person name="Klutch M."/>
            <person name="Lekstrom K."/>
            <person name="Yoshikawa T."/>
            <person name="Asano Y."/>
            <person name="Krause P.R."/>
        </authorList>
    </citation>
    <scope>NUCLEOTIDE SEQUENCE [GENOMIC DNA]</scope>
    <source>
        <strain>Oka varicella vaccine Biken (V-Oka-Biken)</strain>
    </source>
</reference>
<reference key="2">
    <citation type="journal article" date="2002" name="J. Virol.">
        <title>Comparison of the complete DNA sequences of the Oka varicella vaccine and its parental virus.</title>
        <authorList>
            <person name="Gomi Y."/>
            <person name="Sunamachi H."/>
            <person name="Mori Y."/>
            <person name="Nagaike K."/>
            <person name="Takahashi M."/>
            <person name="Yamanishi K."/>
        </authorList>
    </citation>
    <scope>NUCLEOTIDE SEQUENCE [LARGE SCALE GENOMIC DNA]</scope>
    <source>
        <strain>Isolate Human/Japan/P-Oka/1970</strain>
        <strain>Oka varicella vaccine Biken (V-Oka-Biken)</strain>
    </source>
</reference>
<reference key="3">
    <citation type="journal article" date="2008" name="J. Virol.">
        <title>Complete DNA sequences of two oka strain varicella-zoster virus genomes.</title>
        <authorList>
            <person name="Tillieux S.L."/>
            <person name="Halsey W.S."/>
            <person name="Thomas E.S."/>
            <person name="Voycik J.J."/>
            <person name="Sathe G.M."/>
            <person name="Vassilev V."/>
        </authorList>
    </citation>
    <scope>NUCLEOTIDE SEQUENCE [LARGE SCALE GENOMIC DNA]</scope>
    <source>
        <strain>Oka varicella vaccine VarilRix (V-Oka-GSK)</strain>
        <strain>Oka varicella vaccine Varivax (V-Oka-Merck)</strain>
    </source>
</reference>
<organism>
    <name type="scientific">Varicella-zoster virus (strain Oka vaccine)</name>
    <name type="common">HHV-3</name>
    <name type="synonym">Human herpesvirus 3</name>
    <dbReference type="NCBI Taxonomy" id="341980"/>
    <lineage>
        <taxon>Viruses</taxon>
        <taxon>Duplodnaviria</taxon>
        <taxon>Heunggongvirae</taxon>
        <taxon>Peploviricota</taxon>
        <taxon>Herviviricetes</taxon>
        <taxon>Herpesvirales</taxon>
        <taxon>Orthoherpesviridae</taxon>
        <taxon>Alphaherpesvirinae</taxon>
        <taxon>Varicellovirus</taxon>
        <taxon>Varicellovirus humanalpha3</taxon>
        <taxon>Human herpesvirus 3</taxon>
    </lineage>
</organism>
<proteinExistence type="inferred from homology"/>
<keyword id="KW-1048">Host nucleus</keyword>
<name>NP04_VZVO</name>
<accession>Q9J3N4</accession>
<feature type="chain" id="PRO_0000385488" description="Nuclear protein UL4 homolog">
    <location>
        <begin position="1"/>
        <end position="243"/>
    </location>
</feature>
<feature type="region of interest" description="Disordered" evidence="2">
    <location>
        <begin position="193"/>
        <end position="226"/>
    </location>
</feature>
<feature type="compositionally biased region" description="Polar residues" evidence="2">
    <location>
        <begin position="205"/>
        <end position="219"/>
    </location>
</feature>
<dbReference type="EMBL" id="AF206304">
    <property type="protein sequence ID" value="AAF61657.1"/>
    <property type="molecule type" value="Genomic_DNA"/>
</dbReference>
<dbReference type="EMBL" id="AB097932">
    <property type="status" value="NOT_ANNOTATED_CDS"/>
    <property type="molecule type" value="Genomic_DNA"/>
</dbReference>
<dbReference type="EMBL" id="AB097933">
    <property type="status" value="NOT_ANNOTATED_CDS"/>
    <property type="molecule type" value="Genomic_DNA"/>
</dbReference>
<dbReference type="EMBL" id="DQ008354">
    <property type="protein sequence ID" value="AAY57665.1"/>
    <property type="molecule type" value="Genomic_DNA"/>
</dbReference>
<dbReference type="EMBL" id="DQ008355">
    <property type="protein sequence ID" value="AAY57736.1"/>
    <property type="molecule type" value="Genomic_DNA"/>
</dbReference>
<dbReference type="IntAct" id="Q9J3N4">
    <property type="interactions" value="21"/>
</dbReference>
<dbReference type="MINT" id="Q9J3N4"/>
<dbReference type="Proteomes" id="UP000002603">
    <property type="component" value="Genome"/>
</dbReference>
<dbReference type="Proteomes" id="UP000008504">
    <property type="component" value="Genome"/>
</dbReference>
<dbReference type="Proteomes" id="UP000008505">
    <property type="component" value="Genome"/>
</dbReference>
<dbReference type="Proteomes" id="UP000008506">
    <property type="component" value="Genome"/>
</dbReference>
<dbReference type="GO" id="GO:0042025">
    <property type="term" value="C:host cell nucleus"/>
    <property type="evidence" value="ECO:0007669"/>
    <property type="project" value="UniProtKB-SubCell"/>
</dbReference>
<dbReference type="InterPro" id="IPR004958">
    <property type="entry name" value="Herpes_UL4"/>
</dbReference>
<dbReference type="Pfam" id="PF03277">
    <property type="entry name" value="Herpes_UL4"/>
    <property type="match status" value="1"/>
</dbReference>
<gene>
    <name type="ORF">ORF56</name>
</gene>
<organismHost>
    <name type="scientific">Homo sapiens</name>
    <name type="common">Human</name>
    <dbReference type="NCBI Taxonomy" id="9606"/>
</organismHost>
<sequence length="243" mass="27080">MKNPQKLAITFLPLYVIPTYTLCIKALYKNTHAGLLFSFLGFVLNTPAMSISGPPTTFILYRLHGVRRVLHWTLPDHEQTLYAFTGGSRSMAVKTDARCDTMSGGMIVLQHTHTVTLLTIDCSTDFSSYAFTHRDFHLQDKPHATFAMPFMSWVGSDPTSQLYSNVGGVLSVITEDDLSMCISIVIYGLRVNRPDDQTTPTPTPHQYTSQRRQPETNCPSPQPAFFTSDDDVLSLILRDAANA</sequence>
<evidence type="ECO:0000250" key="1"/>
<evidence type="ECO:0000256" key="2">
    <source>
        <dbReference type="SAM" id="MobiDB-lite"/>
    </source>
</evidence>
<evidence type="ECO:0000305" key="3"/>
<protein>
    <recommendedName>
        <fullName>Nuclear protein UL4 homolog</fullName>
    </recommendedName>
    <alternativeName>
        <fullName>ORF56 protein</fullName>
    </alternativeName>
</protein>
<comment type="subcellular location">
    <subcellularLocation>
        <location evidence="1">Host nucleus</location>
    </subcellularLocation>
</comment>
<comment type="similarity">
    <text evidence="3">Belongs to the alphaherpesvirinae HHV-1 UL4 family.</text>
</comment>